<comment type="alternative products">
    <event type="alternative splicing"/>
    <isoform>
        <id>Q9FJ25-1</id>
        <name>1</name>
        <sequence type="displayed"/>
    </isoform>
    <isoform>
        <id>Q9FJ25-2</id>
        <name>2</name>
        <sequence type="described" ref="VSP_042247"/>
    </isoform>
</comment>
<comment type="similarity">
    <text evidence="2">Belongs to the 'GDSL' lipolytic enzyme family.</text>
</comment>
<dbReference type="EC" id="3.1.1.-"/>
<dbReference type="EMBL" id="AB016871">
    <property type="protein sequence ID" value="BAB10664.1"/>
    <property type="molecule type" value="Genomic_DNA"/>
</dbReference>
<dbReference type="EMBL" id="CP002688">
    <property type="protein sequence ID" value="AED94740.1"/>
    <property type="molecule type" value="Genomic_DNA"/>
</dbReference>
<dbReference type="RefSeq" id="NP_199004.2">
    <molecule id="Q9FJ25-2"/>
    <property type="nucleotide sequence ID" value="NM_123554.3"/>
</dbReference>
<dbReference type="SMR" id="Q9FJ25"/>
<dbReference type="FunCoup" id="Q9FJ25">
    <property type="interactions" value="99"/>
</dbReference>
<dbReference type="PaxDb" id="3702-AT5G41890.1"/>
<dbReference type="ProteomicsDB" id="221991">
    <molecule id="Q9FJ25-1"/>
</dbReference>
<dbReference type="EnsemblPlants" id="AT5G41890.1">
    <molecule id="Q9FJ25-2"/>
    <property type="protein sequence ID" value="AT5G41890.1"/>
    <property type="gene ID" value="AT5G41890"/>
</dbReference>
<dbReference type="GeneID" id="834194"/>
<dbReference type="Gramene" id="AT5G41890.1">
    <molecule id="Q9FJ25-2"/>
    <property type="protein sequence ID" value="AT5G41890.1"/>
    <property type="gene ID" value="AT5G41890"/>
</dbReference>
<dbReference type="KEGG" id="ath:AT5G41890"/>
<dbReference type="Araport" id="AT5G41890"/>
<dbReference type="TAIR" id="AT5G41890"/>
<dbReference type="eggNOG" id="ENOG502QR7P">
    <property type="taxonomic scope" value="Eukaryota"/>
</dbReference>
<dbReference type="HOGENOM" id="CLU_015101_0_0_1"/>
<dbReference type="InParanoid" id="Q9FJ25"/>
<dbReference type="OMA" id="PPFICFK"/>
<dbReference type="PhylomeDB" id="Q9FJ25"/>
<dbReference type="BioCyc" id="ARA:AT5G41890-MONOMER"/>
<dbReference type="PRO" id="PR:Q9FJ25"/>
<dbReference type="Proteomes" id="UP000006548">
    <property type="component" value="Chromosome 5"/>
</dbReference>
<dbReference type="ExpressionAtlas" id="Q9FJ25">
    <property type="expression patterns" value="baseline and differential"/>
</dbReference>
<dbReference type="GO" id="GO:0016788">
    <property type="term" value="F:hydrolase activity, acting on ester bonds"/>
    <property type="evidence" value="ECO:0007669"/>
    <property type="project" value="InterPro"/>
</dbReference>
<dbReference type="GO" id="GO:0016042">
    <property type="term" value="P:lipid catabolic process"/>
    <property type="evidence" value="ECO:0007669"/>
    <property type="project" value="UniProtKB-KW"/>
</dbReference>
<dbReference type="CDD" id="cd01837">
    <property type="entry name" value="SGNH_plant_lipase_like"/>
    <property type="match status" value="1"/>
</dbReference>
<dbReference type="Gene3D" id="3.40.50.1110">
    <property type="entry name" value="SGNH hydrolase"/>
    <property type="match status" value="1"/>
</dbReference>
<dbReference type="InterPro" id="IPR001087">
    <property type="entry name" value="GDSL"/>
</dbReference>
<dbReference type="InterPro" id="IPR051058">
    <property type="entry name" value="GDSL_Est/Lipase"/>
</dbReference>
<dbReference type="InterPro" id="IPR036514">
    <property type="entry name" value="SGNH_hydro_sf"/>
</dbReference>
<dbReference type="InterPro" id="IPR035669">
    <property type="entry name" value="SGNH_plant_lipase-like"/>
</dbReference>
<dbReference type="PANTHER" id="PTHR45648">
    <property type="entry name" value="GDSL LIPASE/ACYLHYDROLASE FAMILY PROTEIN (AFU_ORTHOLOGUE AFUA_4G14700)"/>
    <property type="match status" value="1"/>
</dbReference>
<dbReference type="PANTHER" id="PTHR45648:SF5">
    <property type="entry name" value="OS04G0577300 PROTEIN"/>
    <property type="match status" value="1"/>
</dbReference>
<dbReference type="Pfam" id="PF00657">
    <property type="entry name" value="Lipase_GDSL"/>
    <property type="match status" value="1"/>
</dbReference>
<dbReference type="SUPFAM" id="SSF52266">
    <property type="entry name" value="SGNH hydrolase"/>
    <property type="match status" value="1"/>
</dbReference>
<feature type="chain" id="PRO_0000367421" description="GDSL esterase/lipase At5g41890">
    <location>
        <begin position="1"/>
        <end position="369"/>
    </location>
</feature>
<feature type="active site" description="Nucleophile" evidence="1">
    <location>
        <position position="32"/>
    </location>
</feature>
<feature type="active site" evidence="1">
    <location>
        <position position="334"/>
    </location>
</feature>
<feature type="active site" evidence="1">
    <location>
        <position position="337"/>
    </location>
</feature>
<feature type="splice variant" id="VSP_042247" description="In isoform 2." evidence="2">
    <original>MCTQDETIFVLHDQQSNNS</original>
    <variation>MDFTYRCSLKPFNCTFLLLWLSHFQ</variation>
    <location>
        <begin position="1"/>
        <end position="19"/>
    </location>
</feature>
<name>GDL81_ARATH</name>
<proteinExistence type="inferred from homology"/>
<organism>
    <name type="scientific">Arabidopsis thaliana</name>
    <name type="common">Mouse-ear cress</name>
    <dbReference type="NCBI Taxonomy" id="3702"/>
    <lineage>
        <taxon>Eukaryota</taxon>
        <taxon>Viridiplantae</taxon>
        <taxon>Streptophyta</taxon>
        <taxon>Embryophyta</taxon>
        <taxon>Tracheophyta</taxon>
        <taxon>Spermatophyta</taxon>
        <taxon>Magnoliopsida</taxon>
        <taxon>eudicotyledons</taxon>
        <taxon>Gunneridae</taxon>
        <taxon>Pentapetalae</taxon>
        <taxon>rosids</taxon>
        <taxon>malvids</taxon>
        <taxon>Brassicales</taxon>
        <taxon>Brassicaceae</taxon>
        <taxon>Camelineae</taxon>
        <taxon>Arabidopsis</taxon>
    </lineage>
</organism>
<keyword id="KW-0025">Alternative splicing</keyword>
<keyword id="KW-0378">Hydrolase</keyword>
<keyword id="KW-0442">Lipid degradation</keyword>
<keyword id="KW-0443">Lipid metabolism</keyword>
<keyword id="KW-1185">Reference proteome</keyword>
<evidence type="ECO:0000250" key="1"/>
<evidence type="ECO:0000305" key="2"/>
<accession>Q9FJ25</accession>
<accession>F4JZZ2</accession>
<protein>
    <recommendedName>
        <fullName>GDSL esterase/lipase At5g41890</fullName>
        <ecNumber>3.1.1.-</ecNumber>
    </recommendedName>
</protein>
<gene>
    <name type="ordered locus">At5g41890</name>
    <name type="ORF">K16L22.18</name>
</gene>
<reference key="1">
    <citation type="journal article" date="1998" name="DNA Res.">
        <title>Structural analysis of Arabidopsis thaliana chromosome 5. VII. Sequence features of the regions of 1,013,767 bp covered by sixteen physically assigned P1 and TAC clones.</title>
        <authorList>
            <person name="Nakamura Y."/>
            <person name="Sato S."/>
            <person name="Asamizu E."/>
            <person name="Kaneko T."/>
            <person name="Kotani H."/>
            <person name="Miyajima N."/>
            <person name="Tabata S."/>
        </authorList>
    </citation>
    <scope>NUCLEOTIDE SEQUENCE [LARGE SCALE GENOMIC DNA]</scope>
    <source>
        <strain>cv. Columbia</strain>
    </source>
</reference>
<reference key="2">
    <citation type="journal article" date="2017" name="Plant J.">
        <title>Araport11: a complete reannotation of the Arabidopsis thaliana reference genome.</title>
        <authorList>
            <person name="Cheng C.Y."/>
            <person name="Krishnakumar V."/>
            <person name="Chan A.P."/>
            <person name="Thibaud-Nissen F."/>
            <person name="Schobel S."/>
            <person name="Town C.D."/>
        </authorList>
    </citation>
    <scope>GENOME REANNOTATION</scope>
    <source>
        <strain>cv. Columbia</strain>
    </source>
</reference>
<reference key="3">
    <citation type="journal article" date="2004" name="Prog. Lipid Res.">
        <title>GDSL family of serine esterases/lipases.</title>
        <authorList>
            <person name="Akoh C.C."/>
            <person name="Lee G.-C."/>
            <person name="Liaw Y.-C."/>
            <person name="Huang T.-H."/>
            <person name="Shaw J.-F."/>
        </authorList>
    </citation>
    <scope>REVIEW</scope>
</reference>
<reference key="4">
    <citation type="journal article" date="2008" name="Pak. J. Biol. Sci.">
        <title>Sequence analysis of GDSL lipase gene family in Arabidopsis thaliana.</title>
        <authorList>
            <person name="Ling H."/>
        </authorList>
    </citation>
    <scope>GENE FAMILY</scope>
</reference>
<sequence>MCTQDETIFVLHDQQSNNSAAQSFTNFIFGDSLVDVGNNNYIFTLSKADSSPYGIDFAPSNGQPTGRFTNGRTISDIVGEALGAKSPPPPYLEPNTEANTIRNGINYASGAAGILDDTGLLFIGRVPLREQVSNFEKSREYMVRVIGENGTKEMLKNAMFTITIGSNDILNYIQPSIPFFSQDKLPTDVLQDSMVLHLTTHLKRLHQLGGRKFVVVGVGPLGCIPFARALNLIPAGKCSEQVNQVVRGYNMKLIHSLKTLNNELRSEDYNTTFVYANSYDLFLKLVLNYQLFGLKNADKPCCGGYFPPFACFKGPNQNSSQAACEDRSKFVFWDAYHPTEAANLIVAKALLDGDQTVATPFNIRYLNDL</sequence>